<comment type="function">
    <text evidence="1">Transcriptional repressor. Binds to multiple sites in the eve stripe 3 enhancer element. Plays an essential role in the segmentation process both by refining the expression patterns of gap genes and by establishing pair-rules stripes of gene expression (By similarity).</text>
</comment>
<comment type="subcellular location">
    <subcellularLocation>
        <location>Nucleus</location>
    </subcellularLocation>
</comment>
<comment type="similarity">
    <text evidence="4">Belongs to the nuclear hormone receptor family. NR0 subfamily.</text>
</comment>
<sequence length="481" mass="51031">MNQTCKVCGEPAAGFHFGAFTCEGCKSFFGRSYNNISTISECKNDGKCIIDKKNRTTCKACRLRKCYNVGMSKGGSRYGRRSNWFKIHCLLQEHEQAAAAAAGKAPGHATGSPMSSPGFGDLAAHLQQQQQQHQQQQQQQHQHQQQQQRHPHLPPLLGYTGYHLPEHFGARHPADAAAAAAALPFFSMMATPQSAFQLPPHLLFPGYHASAAAAAAADAAYRQEMYKHRQSVDSAASAESHSRYTPPTVATVPQQSQPQPAASPIDVCLGADDDVQSQHSHSHSHSQSQSPHTIHTPVAIRATPPQQLLPGLTTASHSSSASPTPSKSQSSSPLSFTAKMQSLSPVSVCSIGGETAAANAAASAAAAAQDGPMDLSMKTSRSSVHSFNDSDVCSLQDEHELAARRKYYQLEAECTTITNTTNSCSSSTSTSSSNSSTSSTEAAVAVKRQKLNPIGGESPPFGGFAVTHNASSAMRSIFVCV</sequence>
<accession>Q24753</accession>
<keyword id="KW-0217">Developmental protein</keyword>
<keyword id="KW-0238">DNA-binding</keyword>
<keyword id="KW-0479">Metal-binding</keyword>
<keyword id="KW-0539">Nucleus</keyword>
<keyword id="KW-0675">Receptor</keyword>
<keyword id="KW-0678">Repressor</keyword>
<keyword id="KW-0804">Transcription</keyword>
<keyword id="KW-0805">Transcription regulation</keyword>
<keyword id="KW-0862">Zinc</keyword>
<keyword id="KW-0863">Zinc-finger</keyword>
<reference key="1">
    <citation type="journal article" date="1994" name="Mol. Cell. Biol.">
        <title>Functional and conserved domains of the Drosophila transcription factor encoded by the segmentation gene knirps.</title>
        <authorList>
            <person name="Gerwin N."/>
            <person name="la Rosee A."/>
            <person name="Sauer F."/>
            <person name="Halbritter H.P."/>
            <person name="Neumann M."/>
            <person name="Jackle H."/>
            <person name="Nauber U."/>
        </authorList>
    </citation>
    <scope>NUCLEOTIDE SEQUENCE [GENOMIC DNA]</scope>
</reference>
<feature type="chain" id="PRO_0000053744" description="Zygotic gap protein knirps">
    <location>
        <begin position="1"/>
        <end position="481"/>
    </location>
</feature>
<feature type="DNA-binding region" description="Nuclear receptor" evidence="2">
    <location>
        <begin position="2"/>
        <end position="78"/>
    </location>
</feature>
<feature type="zinc finger region" description="NR C4-type" evidence="2">
    <location>
        <begin position="5"/>
        <end position="25"/>
    </location>
</feature>
<feature type="zinc finger region" description="NR C4-type" evidence="2">
    <location>
        <begin position="42"/>
        <end position="66"/>
    </location>
</feature>
<feature type="region of interest" description="Disordered" evidence="3">
    <location>
        <begin position="100"/>
        <end position="161"/>
    </location>
</feature>
<feature type="region of interest" description="Disordered" evidence="3">
    <location>
        <begin position="231"/>
        <end position="294"/>
    </location>
</feature>
<feature type="region of interest" description="Disordered" evidence="3">
    <location>
        <begin position="308"/>
        <end position="336"/>
    </location>
</feature>
<feature type="region of interest" description="Disordered" evidence="3">
    <location>
        <begin position="420"/>
        <end position="442"/>
    </location>
</feature>
<feature type="compositionally biased region" description="Low complexity" evidence="3">
    <location>
        <begin position="100"/>
        <end position="111"/>
    </location>
</feature>
<feature type="compositionally biased region" description="Low complexity" evidence="3">
    <location>
        <begin position="127"/>
        <end position="148"/>
    </location>
</feature>
<feature type="compositionally biased region" description="Low complexity" evidence="3">
    <location>
        <begin position="245"/>
        <end position="264"/>
    </location>
</feature>
<feature type="compositionally biased region" description="Low complexity" evidence="3">
    <location>
        <begin position="316"/>
        <end position="335"/>
    </location>
</feature>
<feature type="compositionally biased region" description="Low complexity" evidence="3">
    <location>
        <begin position="420"/>
        <end position="440"/>
    </location>
</feature>
<proteinExistence type="inferred from homology"/>
<gene>
    <name type="primary">kni</name>
    <name type="synonym">NR0A1</name>
</gene>
<dbReference type="EMBL" id="L36177">
    <property type="protein sequence ID" value="AAA66190.1"/>
    <property type="molecule type" value="Genomic_DNA"/>
</dbReference>
<dbReference type="PIR" id="A56346">
    <property type="entry name" value="A56346"/>
</dbReference>
<dbReference type="SMR" id="Q24753"/>
<dbReference type="eggNOG" id="ENOG502QURP">
    <property type="taxonomic scope" value="Eukaryota"/>
</dbReference>
<dbReference type="OrthoDB" id="5850793at2759"/>
<dbReference type="GO" id="GO:0005634">
    <property type="term" value="C:nucleus"/>
    <property type="evidence" value="ECO:0007669"/>
    <property type="project" value="UniProtKB-SubCell"/>
</dbReference>
<dbReference type="GO" id="GO:0003700">
    <property type="term" value="F:DNA-binding transcription factor activity"/>
    <property type="evidence" value="ECO:0007669"/>
    <property type="project" value="InterPro"/>
</dbReference>
<dbReference type="GO" id="GO:0043565">
    <property type="term" value="F:sequence-specific DNA binding"/>
    <property type="evidence" value="ECO:0007669"/>
    <property type="project" value="InterPro"/>
</dbReference>
<dbReference type="GO" id="GO:0008270">
    <property type="term" value="F:zinc ion binding"/>
    <property type="evidence" value="ECO:0007669"/>
    <property type="project" value="UniProtKB-KW"/>
</dbReference>
<dbReference type="FunFam" id="3.30.50.10:FF:000034">
    <property type="entry name" value="CLUMA_CG002674, isoform A"/>
    <property type="match status" value="1"/>
</dbReference>
<dbReference type="Gene3D" id="3.30.50.10">
    <property type="entry name" value="Erythroid Transcription Factor GATA-1, subunit A"/>
    <property type="match status" value="1"/>
</dbReference>
<dbReference type="InterPro" id="IPR050200">
    <property type="entry name" value="Nuclear_hormone_rcpt_NR3"/>
</dbReference>
<dbReference type="InterPro" id="IPR001628">
    <property type="entry name" value="Znf_hrmn_rcpt"/>
</dbReference>
<dbReference type="InterPro" id="IPR013088">
    <property type="entry name" value="Znf_NHR/GATA"/>
</dbReference>
<dbReference type="PANTHER" id="PTHR48092">
    <property type="entry name" value="KNIRPS-RELATED PROTEIN-RELATED"/>
    <property type="match status" value="1"/>
</dbReference>
<dbReference type="Pfam" id="PF00105">
    <property type="entry name" value="zf-C4"/>
    <property type="match status" value="1"/>
</dbReference>
<dbReference type="PRINTS" id="PR00047">
    <property type="entry name" value="STROIDFINGER"/>
</dbReference>
<dbReference type="SMART" id="SM00399">
    <property type="entry name" value="ZnF_C4"/>
    <property type="match status" value="1"/>
</dbReference>
<dbReference type="SUPFAM" id="SSF57716">
    <property type="entry name" value="Glucocorticoid receptor-like (DNA-binding domain)"/>
    <property type="match status" value="1"/>
</dbReference>
<dbReference type="PROSITE" id="PS00031">
    <property type="entry name" value="NUCLEAR_REC_DBD_1"/>
    <property type="match status" value="1"/>
</dbReference>
<dbReference type="PROSITE" id="PS51030">
    <property type="entry name" value="NUCLEAR_REC_DBD_2"/>
    <property type="match status" value="1"/>
</dbReference>
<organism>
    <name type="scientific">Drosophila virilis</name>
    <name type="common">Fruit fly</name>
    <dbReference type="NCBI Taxonomy" id="7244"/>
    <lineage>
        <taxon>Eukaryota</taxon>
        <taxon>Metazoa</taxon>
        <taxon>Ecdysozoa</taxon>
        <taxon>Arthropoda</taxon>
        <taxon>Hexapoda</taxon>
        <taxon>Insecta</taxon>
        <taxon>Pterygota</taxon>
        <taxon>Neoptera</taxon>
        <taxon>Endopterygota</taxon>
        <taxon>Diptera</taxon>
        <taxon>Brachycera</taxon>
        <taxon>Muscomorpha</taxon>
        <taxon>Ephydroidea</taxon>
        <taxon>Drosophilidae</taxon>
        <taxon>Drosophila</taxon>
    </lineage>
</organism>
<evidence type="ECO:0000250" key="1"/>
<evidence type="ECO:0000255" key="2">
    <source>
        <dbReference type="PROSITE-ProRule" id="PRU00407"/>
    </source>
</evidence>
<evidence type="ECO:0000256" key="3">
    <source>
        <dbReference type="SAM" id="MobiDB-lite"/>
    </source>
</evidence>
<evidence type="ECO:0000305" key="4"/>
<name>KNIR_DROVI</name>
<protein>
    <recommendedName>
        <fullName>Zygotic gap protein knirps</fullName>
    </recommendedName>
    <alternativeName>
        <fullName>Nuclear receptor subfamily 0 group A member 1</fullName>
    </alternativeName>
</protein>